<reference key="1">
    <citation type="journal article" date="1999" name="Genetics">
        <title>Divergence of the hyperthermophilic archaea Pyrococcus furiosus and P. horikoshii inferred from complete genomic sequences.</title>
        <authorList>
            <person name="Maeder D.L."/>
            <person name="Weiss R.B."/>
            <person name="Dunn D.M."/>
            <person name="Cherry J.L."/>
            <person name="Gonzalez J.M."/>
            <person name="DiRuggiero J."/>
            <person name="Robb F.T."/>
        </authorList>
    </citation>
    <scope>NUCLEOTIDE SEQUENCE [LARGE SCALE GENOMIC DNA]</scope>
    <source>
        <strain>ATCC 43587 / DSM 3638 / JCM 8422 / Vc1</strain>
    </source>
</reference>
<protein>
    <recommendedName>
        <fullName evidence="2">Elongation factor 1-alpha</fullName>
        <shortName evidence="2">EF-1-alpha</shortName>
        <ecNumber evidence="2">3.6.5.3</ecNumber>
    </recommendedName>
    <alternativeName>
        <fullName evidence="2">Elongation factor Tu</fullName>
        <shortName evidence="2">EF-Tu</shortName>
    </alternativeName>
</protein>
<name>EF1A_PYRFU</name>
<evidence type="ECO:0000250" key="1"/>
<evidence type="ECO:0000255" key="2">
    <source>
        <dbReference type="HAMAP-Rule" id="MF_00118"/>
    </source>
</evidence>
<sequence length="428" mass="47635">MPKDKPHVNIVFIGHVDHGKSTTIGRLLYDTGNIPEQIIKKFEEMGEKGKSFKFAWVMDRLKEERERGITIDVAHTKFETPHRYITIIDAPGHRDFVKNMITGASQADAAVLVVAATDGVMPQTKEHAFLARTLGIKHIIVAINKMDMVNYNQKRFEEVKAQVEKLLKMLGYKDFPVIPISAWEGENVVKKSDKMPWYNGPTLIEALDQIPEPEKPVDKPLRIPIQDVYSIKGVGTVPVGRVETGKLRVGEVVIFEPASTIFHKPIQGEVKSIEMHHEPLEEALPGDNIGFNVRGVSKNDIKRGDVAGHTTNPPTVVRTKDTFKAQIIVLNHPTAITVGYSPVLHAHTAQVPVRFEQLLAKLDPKTGNIVEENPQFIKTGDAAIVILRPMKPVVLEPVKEIPQLGRFAIRDMGMTIAAGMVISIQRGE</sequence>
<organism>
    <name type="scientific">Pyrococcus furiosus (strain ATCC 43587 / DSM 3638 / JCM 8422 / Vc1)</name>
    <dbReference type="NCBI Taxonomy" id="186497"/>
    <lineage>
        <taxon>Archaea</taxon>
        <taxon>Methanobacteriati</taxon>
        <taxon>Methanobacteriota</taxon>
        <taxon>Thermococci</taxon>
        <taxon>Thermococcales</taxon>
        <taxon>Thermococcaceae</taxon>
        <taxon>Pyrococcus</taxon>
    </lineage>
</organism>
<comment type="function">
    <text evidence="2">GTP hydrolase that promotes the GTP-dependent binding of aminoacyl-tRNA to the A-site of ribosomes during protein biosynthesis.</text>
</comment>
<comment type="catalytic activity">
    <reaction evidence="2">
        <text>GTP + H2O = GDP + phosphate + H(+)</text>
        <dbReference type="Rhea" id="RHEA:19669"/>
        <dbReference type="ChEBI" id="CHEBI:15377"/>
        <dbReference type="ChEBI" id="CHEBI:15378"/>
        <dbReference type="ChEBI" id="CHEBI:37565"/>
        <dbReference type="ChEBI" id="CHEBI:43474"/>
        <dbReference type="ChEBI" id="CHEBI:58189"/>
        <dbReference type="EC" id="3.6.5.3"/>
    </reaction>
    <physiologicalReaction direction="left-to-right" evidence="2">
        <dbReference type="Rhea" id="RHEA:19670"/>
    </physiologicalReaction>
</comment>
<comment type="subcellular location">
    <subcellularLocation>
        <location evidence="2">Cytoplasm</location>
    </subcellularLocation>
</comment>
<comment type="similarity">
    <text evidence="2">Belongs to the TRAFAC class translation factor GTPase superfamily. Classic translation factor GTPase family. EF-Tu/EF-1A subfamily.</text>
</comment>
<accession>Q8U152</accession>
<proteinExistence type="inferred from homology"/>
<gene>
    <name evidence="2" type="primary">tuf</name>
    <name type="ordered locus">PF1375</name>
</gene>
<feature type="chain" id="PRO_0000090989" description="Elongation factor 1-alpha">
    <location>
        <begin position="1"/>
        <end position="428"/>
    </location>
</feature>
<feature type="domain" description="tr-type G">
    <location>
        <begin position="5"/>
        <end position="217"/>
    </location>
</feature>
<feature type="region of interest" description="G1" evidence="1">
    <location>
        <begin position="14"/>
        <end position="21"/>
    </location>
</feature>
<feature type="region of interest" description="G2" evidence="1">
    <location>
        <begin position="68"/>
        <end position="72"/>
    </location>
</feature>
<feature type="region of interest" description="G3" evidence="1">
    <location>
        <begin position="89"/>
        <end position="92"/>
    </location>
</feature>
<feature type="region of interest" description="G4" evidence="1">
    <location>
        <begin position="144"/>
        <end position="147"/>
    </location>
</feature>
<feature type="region of interest" description="G5" evidence="1">
    <location>
        <begin position="181"/>
        <end position="183"/>
    </location>
</feature>
<feature type="binding site" evidence="2">
    <location>
        <begin position="14"/>
        <end position="21"/>
    </location>
    <ligand>
        <name>GTP</name>
        <dbReference type="ChEBI" id="CHEBI:37565"/>
    </ligand>
</feature>
<feature type="binding site" evidence="2">
    <location>
        <position position="21"/>
    </location>
    <ligand>
        <name>Mg(2+)</name>
        <dbReference type="ChEBI" id="CHEBI:18420"/>
    </ligand>
</feature>
<feature type="binding site" evidence="2">
    <location>
        <begin position="89"/>
        <end position="93"/>
    </location>
    <ligand>
        <name>GTP</name>
        <dbReference type="ChEBI" id="CHEBI:37565"/>
    </ligand>
</feature>
<feature type="binding site" evidence="2">
    <location>
        <begin position="144"/>
        <end position="147"/>
    </location>
    <ligand>
        <name>GTP</name>
        <dbReference type="ChEBI" id="CHEBI:37565"/>
    </ligand>
</feature>
<dbReference type="EC" id="3.6.5.3" evidence="2"/>
<dbReference type="EMBL" id="AE009950">
    <property type="protein sequence ID" value="AAL81499.1"/>
    <property type="molecule type" value="Genomic_DNA"/>
</dbReference>
<dbReference type="RefSeq" id="WP_011012522.1">
    <property type="nucleotide sequence ID" value="NZ_CP023154.1"/>
</dbReference>
<dbReference type="SMR" id="Q8U152"/>
<dbReference type="IntAct" id="Q8U152">
    <property type="interactions" value="1"/>
</dbReference>
<dbReference type="STRING" id="186497.PF1375"/>
<dbReference type="PaxDb" id="186497-PF1375"/>
<dbReference type="GeneID" id="41713182"/>
<dbReference type="KEGG" id="pfu:PF1375"/>
<dbReference type="PATRIC" id="fig|186497.12.peg.1438"/>
<dbReference type="eggNOG" id="arCOG01561">
    <property type="taxonomic scope" value="Archaea"/>
</dbReference>
<dbReference type="HOGENOM" id="CLU_007265_3_5_2"/>
<dbReference type="OrthoDB" id="371718at2157"/>
<dbReference type="PhylomeDB" id="Q8U152"/>
<dbReference type="Proteomes" id="UP000001013">
    <property type="component" value="Chromosome"/>
</dbReference>
<dbReference type="GO" id="GO:0005737">
    <property type="term" value="C:cytoplasm"/>
    <property type="evidence" value="ECO:0007669"/>
    <property type="project" value="UniProtKB-SubCell"/>
</dbReference>
<dbReference type="GO" id="GO:0005525">
    <property type="term" value="F:GTP binding"/>
    <property type="evidence" value="ECO:0007669"/>
    <property type="project" value="UniProtKB-UniRule"/>
</dbReference>
<dbReference type="GO" id="GO:0003924">
    <property type="term" value="F:GTPase activity"/>
    <property type="evidence" value="ECO:0007669"/>
    <property type="project" value="InterPro"/>
</dbReference>
<dbReference type="GO" id="GO:0003746">
    <property type="term" value="F:translation elongation factor activity"/>
    <property type="evidence" value="ECO:0007669"/>
    <property type="project" value="UniProtKB-UniRule"/>
</dbReference>
<dbReference type="CDD" id="cd01883">
    <property type="entry name" value="EF1_alpha"/>
    <property type="match status" value="1"/>
</dbReference>
<dbReference type="CDD" id="cd03693">
    <property type="entry name" value="EF1_alpha_II"/>
    <property type="match status" value="1"/>
</dbReference>
<dbReference type="CDD" id="cd03705">
    <property type="entry name" value="EF1_alpha_III"/>
    <property type="match status" value="1"/>
</dbReference>
<dbReference type="FunFam" id="2.40.30.10:FF:000003">
    <property type="entry name" value="Elongation factor 1-alpha"/>
    <property type="match status" value="1"/>
</dbReference>
<dbReference type="FunFam" id="2.40.30.10:FF:000005">
    <property type="entry name" value="Elongation factor 1-alpha"/>
    <property type="match status" value="1"/>
</dbReference>
<dbReference type="Gene3D" id="3.40.50.300">
    <property type="entry name" value="P-loop containing nucleotide triphosphate hydrolases"/>
    <property type="match status" value="1"/>
</dbReference>
<dbReference type="Gene3D" id="2.40.30.10">
    <property type="entry name" value="Translation factors"/>
    <property type="match status" value="2"/>
</dbReference>
<dbReference type="HAMAP" id="MF_00118_A">
    <property type="entry name" value="EF_Tu_A"/>
    <property type="match status" value="1"/>
</dbReference>
<dbReference type="InterPro" id="IPR004161">
    <property type="entry name" value="EFTu-like_2"/>
</dbReference>
<dbReference type="InterPro" id="IPR031157">
    <property type="entry name" value="G_TR_CS"/>
</dbReference>
<dbReference type="InterPro" id="IPR054696">
    <property type="entry name" value="GTP-eEF1A_C"/>
</dbReference>
<dbReference type="InterPro" id="IPR027417">
    <property type="entry name" value="P-loop_NTPase"/>
</dbReference>
<dbReference type="InterPro" id="IPR005225">
    <property type="entry name" value="Small_GTP-bd"/>
</dbReference>
<dbReference type="InterPro" id="IPR000795">
    <property type="entry name" value="T_Tr_GTP-bd_dom"/>
</dbReference>
<dbReference type="InterPro" id="IPR050100">
    <property type="entry name" value="TRAFAC_GTPase_members"/>
</dbReference>
<dbReference type="InterPro" id="IPR009000">
    <property type="entry name" value="Transl_B-barrel_sf"/>
</dbReference>
<dbReference type="InterPro" id="IPR009001">
    <property type="entry name" value="Transl_elong_EF1A/Init_IF2_C"/>
</dbReference>
<dbReference type="InterPro" id="IPR004539">
    <property type="entry name" value="Transl_elong_EF1A_euk/arc"/>
</dbReference>
<dbReference type="NCBIfam" id="TIGR00483">
    <property type="entry name" value="EF-1_alpha"/>
    <property type="match status" value="1"/>
</dbReference>
<dbReference type="NCBIfam" id="NF008969">
    <property type="entry name" value="PRK12317.1"/>
    <property type="match status" value="1"/>
</dbReference>
<dbReference type="NCBIfam" id="TIGR00231">
    <property type="entry name" value="small_GTP"/>
    <property type="match status" value="1"/>
</dbReference>
<dbReference type="PANTHER" id="PTHR23115">
    <property type="entry name" value="TRANSLATION FACTOR"/>
    <property type="match status" value="1"/>
</dbReference>
<dbReference type="Pfam" id="PF22594">
    <property type="entry name" value="GTP-eEF1A_C"/>
    <property type="match status" value="1"/>
</dbReference>
<dbReference type="Pfam" id="PF00009">
    <property type="entry name" value="GTP_EFTU"/>
    <property type="match status" value="1"/>
</dbReference>
<dbReference type="Pfam" id="PF03144">
    <property type="entry name" value="GTP_EFTU_D2"/>
    <property type="match status" value="1"/>
</dbReference>
<dbReference type="PRINTS" id="PR00315">
    <property type="entry name" value="ELONGATNFCT"/>
</dbReference>
<dbReference type="SUPFAM" id="SSF50465">
    <property type="entry name" value="EF-Tu/eEF-1alpha/eIF2-gamma C-terminal domain"/>
    <property type="match status" value="1"/>
</dbReference>
<dbReference type="SUPFAM" id="SSF52540">
    <property type="entry name" value="P-loop containing nucleoside triphosphate hydrolases"/>
    <property type="match status" value="1"/>
</dbReference>
<dbReference type="SUPFAM" id="SSF50447">
    <property type="entry name" value="Translation proteins"/>
    <property type="match status" value="1"/>
</dbReference>
<dbReference type="PROSITE" id="PS00301">
    <property type="entry name" value="G_TR_1"/>
    <property type="match status" value="1"/>
</dbReference>
<dbReference type="PROSITE" id="PS51722">
    <property type="entry name" value="G_TR_2"/>
    <property type="match status" value="1"/>
</dbReference>
<keyword id="KW-0963">Cytoplasm</keyword>
<keyword id="KW-0251">Elongation factor</keyword>
<keyword id="KW-0342">GTP-binding</keyword>
<keyword id="KW-0378">Hydrolase</keyword>
<keyword id="KW-0460">Magnesium</keyword>
<keyword id="KW-0479">Metal-binding</keyword>
<keyword id="KW-0547">Nucleotide-binding</keyword>
<keyword id="KW-0648">Protein biosynthesis</keyword>
<keyword id="KW-1185">Reference proteome</keyword>